<gene>
    <name evidence="16" type="primary">Avr3a</name>
    <name evidence="18" type="synonym">Avr3a(EM)</name>
    <name evidence="16" type="synonym">Pex147</name>
    <name evidence="19" type="synonym">PexRD7</name>
    <name type="ORF">PITG_14371</name>
</gene>
<comment type="function">
    <text evidence="3 4 6 8 9 10 12">Multifunctional effector that can suppress host BAK1/SERK3-mediated immunity through at least two different pathways (PubMed:19794118, PubMed:20457921, PubMed:21348873, PubMed:26348328). Manipulates plant immunity by targeting and stabilizing host E3 ligase CMPG1. By preventing the normal 26S proteasome-dependent degradation of potato CMPG1, and thus potentially of its protein substrates in the host cell, Avr3a further abolishes host cell death during the biotrophic phase of infection (PubMed:19794118, PubMed:20457921, PubMed:21348873). Also associates with and affects the function of the dynamin-related protein 2 (DRP2), a plant GTPase involved in immune receptor-mediated endocytosis (PubMed:26348328). The Avr3a(EM) form evades recognition by R3a, thus does not trigger R3a-mediated hypersensitivity and does not suppress INF1-induced cell death (PubMed:15894622, PubMed:16965554, PubMed:19245321).</text>
</comment>
<comment type="subunit">
    <text evidence="9 11 12">Forms homodimers via the RxLR-dEER motif (PubMed:22977236). Interacts with host E3 ligase CMPG1 (PubMed:20457921). Interacts with host DRP2 (PubMed:26348328).</text>
</comment>
<comment type="subcellular location">
    <subcellularLocation>
        <location evidence="3 4 5 15">Secreted</location>
    </subcellularLocation>
    <subcellularLocation>
        <location evidence="3 4 5 15">Host cytoplasm</location>
    </subcellularLocation>
</comment>
<comment type="induction">
    <text evidence="7 13 15">Expression is induced during host plant infection.</text>
</comment>
<comment type="domain">
    <text evidence="5 11 14">The RxLR-dEER motif is required for the delivery of the effector to the host cell cytoplasm but does not bind phosphatidylinositol monophosphates (PubMed:17914356, PubMed:22977236). The motif is cleaved after the RxLR sequence (PubMed:28522546). The RxLR motif (residues 44 to 47) plays a crucial role in the intracellular processing before secretion (PubMed:28522546). The Glu-rich part localized just after the cleavage site (residues 48 to 59) is required for homodimerization (PubMed:28522546).</text>
</comment>
<comment type="domain">
    <text evidence="1">The conserved, positively charged effector domain (residues 77 to 147), rather than the RxLR-dEER motif, is required for binding to phosphatidylinositol monophosphates (PIPs). PIP binding is necessary for accumulation of CMPG1 and Avr3a in host plants.</text>
</comment>
<comment type="PTM">
    <text evidence="14">Proteolytically cleaved. The cleavage site directly after the RxLR sequence and the high conservation among other effector proteins suggest that the RxLR motif might play a crucial role in the intracellular processing before secretion.</text>
</comment>
<comment type="PTM">
    <text evidence="14">glycosylated.</text>
</comment>
<comment type="PTM">
    <text evidence="14">N-acetylated at Lys-48 after cleavage.</text>
</comment>
<comment type="miscellaneous">
    <text evidence="3 4">The AVR3a protein of Phytophthora infestans is a polymorphic member of the RXLR class of cytoplasmic effectors with dual functions. AVR3a(KI) but not AVR3a(EM) activates innate immunity triggered by the potato resistance protein R3a and is a strong suppressor of the cell-death response induced by INF1 elicitin, a secreted P.infestans protein that has features of pathogen-associated molecular patterns. The 2 polymorphic residues between Avr3A(KI) and Avr3a(EM) are localized at positions 80 and 103, respectively.</text>
</comment>
<comment type="similarity">
    <text evidence="20">Belongs to the RxLR effector family.</text>
</comment>
<feature type="signal peptide" evidence="2">
    <location>
        <begin position="1"/>
        <end position="21"/>
    </location>
</feature>
<feature type="chain" id="PRO_5003012271" description="RxLR effector protein Avr3a">
    <location>
        <begin position="22"/>
        <end position="147"/>
    </location>
</feature>
<feature type="region of interest" description="Effector domain" evidence="1">
    <location>
        <begin position="77"/>
        <end position="147"/>
    </location>
</feature>
<feature type="short sequence motif" description="RxLR-dEER" evidence="21">
    <location>
        <begin position="44"/>
        <end position="59"/>
    </location>
</feature>
<feature type="site" description="Cleavage" evidence="14">
    <location>
        <begin position="47"/>
        <end position="48"/>
    </location>
</feature>
<feature type="modified residue" description="N6-acetyllysine" evidence="14">
    <location>
        <position position="48"/>
    </location>
</feature>
<reference key="1">
    <citation type="journal article" date="2009" name="Nature">
        <title>Genome sequence and analysis of the Irish potato famine pathogen Phytophthora infestans.</title>
        <authorList>
            <consortium name="The Broad Institute Genome Sequencing Platform"/>
            <person name="Haas B.J."/>
            <person name="Kamoun S."/>
            <person name="Zody M.C."/>
            <person name="Jiang R.H."/>
            <person name="Handsaker R.E."/>
            <person name="Cano L.M."/>
            <person name="Grabherr M."/>
            <person name="Kodira C.D."/>
            <person name="Raffaele S."/>
            <person name="Torto-Alalibo T."/>
            <person name="Bozkurt T.O."/>
            <person name="Ah-Fong A.M."/>
            <person name="Alvarado L."/>
            <person name="Anderson V.L."/>
            <person name="Armstrong M.R."/>
            <person name="Avrova A."/>
            <person name="Baxter L."/>
            <person name="Beynon J."/>
            <person name="Boevink P.C."/>
            <person name="Bollmann S.R."/>
            <person name="Bos J.I."/>
            <person name="Bulone V."/>
            <person name="Cai G."/>
            <person name="Cakir C."/>
            <person name="Carrington J.C."/>
            <person name="Chawner M."/>
            <person name="Conti L."/>
            <person name="Costanzo S."/>
            <person name="Ewan R."/>
            <person name="Fahlgren N."/>
            <person name="Fischbach M.A."/>
            <person name="Fugelstad J."/>
            <person name="Gilroy E.M."/>
            <person name="Gnerre S."/>
            <person name="Green P.J."/>
            <person name="Grenville-Briggs L.J."/>
            <person name="Griffith J."/>
            <person name="Grunwald N.J."/>
            <person name="Horn K."/>
            <person name="Horner N.R."/>
            <person name="Hu C.H."/>
            <person name="Huitema E."/>
            <person name="Jeong D.H."/>
            <person name="Jones A.M."/>
            <person name="Jones J.D."/>
            <person name="Jones R.W."/>
            <person name="Karlsson E.K."/>
            <person name="Kunjeti S.G."/>
            <person name="Lamour K."/>
            <person name="Liu Z."/>
            <person name="Ma L."/>
            <person name="Maclean D."/>
            <person name="Chibucos M.C."/>
            <person name="McDonald H."/>
            <person name="McWalters J."/>
            <person name="Meijer H.J."/>
            <person name="Morgan W."/>
            <person name="Morris P.F."/>
            <person name="Munro C.A."/>
            <person name="O'Neill K."/>
            <person name="Ospina-Giraldo M."/>
            <person name="Pinzon A."/>
            <person name="Pritchard L."/>
            <person name="Ramsahoye B."/>
            <person name="Ren Q."/>
            <person name="Restrepo S."/>
            <person name="Roy S."/>
            <person name="Sadanandom A."/>
            <person name="Savidor A."/>
            <person name="Schornack S."/>
            <person name="Schwartz D.C."/>
            <person name="Schumann U.D."/>
            <person name="Schwessinger B."/>
            <person name="Seyer L."/>
            <person name="Sharpe T."/>
            <person name="Silvar C."/>
            <person name="Song J."/>
            <person name="Studholme D.J."/>
            <person name="Sykes S."/>
            <person name="Thines M."/>
            <person name="van de Vondervoort P.J."/>
            <person name="Phuntumart V."/>
            <person name="Wawra S."/>
            <person name="Weide R."/>
            <person name="Win J."/>
            <person name="Young C."/>
            <person name="Zhou S."/>
            <person name="Fry W."/>
            <person name="Meyers B.C."/>
            <person name="van West P."/>
            <person name="Ristaino J."/>
            <person name="Govers F."/>
            <person name="Birch P.R."/>
            <person name="Whisson S.C."/>
            <person name="Judelson H.S."/>
            <person name="Nusbaum C."/>
        </authorList>
    </citation>
    <scope>NUCLEOTIDE SEQUENCE [LARGE SCALE GENOMIC DNA]</scope>
    <scope>INDUCTION</scope>
    <source>
        <strain>T30-4</strain>
    </source>
</reference>
<reference key="2">
    <citation type="journal article" date="2005" name="Proc. Natl. Acad. Sci. U.S.A.">
        <title>An ancestral oomycete locus contains late blight avirulence gene Avr3a, encoding a protein that is recognized in the host cytoplasm.</title>
        <authorList>
            <person name="Armstrong M.R."/>
            <person name="Whisson S.C."/>
            <person name="Pritchard L."/>
            <person name="Bos J.I."/>
            <person name="Venter E."/>
            <person name="Avrova A.O."/>
            <person name="Rehmany A.P."/>
            <person name="Boehme U."/>
            <person name="Brooks K."/>
            <person name="Cherevach I."/>
            <person name="Hamlin N."/>
            <person name="White B."/>
            <person name="Fraser A."/>
            <person name="Lord A."/>
            <person name="Quail M.A."/>
            <person name="Churcher C."/>
            <person name="Hall N."/>
            <person name="Berriman M."/>
            <person name="Huang S."/>
            <person name="Kamoun S."/>
            <person name="Beynon J.L."/>
            <person name="Birch P.R."/>
        </authorList>
    </citation>
    <scope>FUNCTION</scope>
    <scope>SUBCELLULAR LOCATION</scope>
</reference>
<reference key="3">
    <citation type="journal article" date="2006" name="Plant J.">
        <title>The C-terminal half of Phytophthora infestans RXLR effector AVR3a is sufficient to trigger R3a-mediated hypersensitivity and suppress INF1-induced cell death in Nicotiana benthamiana.</title>
        <authorList>
            <person name="Bos J.I."/>
            <person name="Kanneganti T.D."/>
            <person name="Young C."/>
            <person name="Cakir C."/>
            <person name="Huitema E."/>
            <person name="Win J."/>
            <person name="Armstrong M.R."/>
            <person name="Birch P.R."/>
            <person name="Kamoun S."/>
        </authorList>
    </citation>
    <scope>FUNCTION</scope>
</reference>
<reference key="4">
    <citation type="journal article" date="2007" name="Nature">
        <title>A translocation signal for delivery of oomycete effector proteins into host plant cells.</title>
        <authorList>
            <person name="Whisson S.C."/>
            <person name="Boevink P.C."/>
            <person name="Moleleki L."/>
            <person name="Avrova A.O."/>
            <person name="Morales J.G."/>
            <person name="Gilroy E.M."/>
            <person name="Armstrong M.R."/>
            <person name="Grouffaud S."/>
            <person name="van West P."/>
            <person name="Chapman S."/>
            <person name="Hein I."/>
            <person name="Toth I.K."/>
            <person name="Pritchard L."/>
            <person name="Birch P.R."/>
        </authorList>
    </citation>
    <scope>DOMAIN</scope>
    <scope>SUBCELLULAR LOCATION</scope>
</reference>
<reference key="5">
    <citation type="journal article" date="2009" name="Plant Cell">
        <title>In planta expression screens of Phytophthora infestans RXLR effectors reveal diverse phenotypes, including activation of the Solanum bulbocastanum disease resistance protein Rpi-blb2.</title>
        <authorList>
            <person name="Oh S.K."/>
            <person name="Young C."/>
            <person name="Lee M."/>
            <person name="Oliva R."/>
            <person name="Bozkurt T.O."/>
            <person name="Cano L.M."/>
            <person name="Win J."/>
            <person name="Bos J.I."/>
            <person name="Liu H.Y."/>
            <person name="van Damme M."/>
            <person name="Morgan W."/>
            <person name="Choi D."/>
            <person name="Van der Vossen E.A."/>
            <person name="Vleeshouwers V.G."/>
            <person name="Kamoun S."/>
        </authorList>
    </citation>
    <scope>FUNCTION</scope>
</reference>
<reference key="6">
    <citation type="journal article" date="2009" name="Mol. Plant Microbe Interact.">
        <title>Distinct amino acids of the Phytophthora infestans effector AVR3a condition activation of R3a hypersensitivity and suppression of cell death.</title>
        <authorList>
            <person name="Bos J.I."/>
            <person name="Chaparro-Garcia A."/>
            <person name="Quesada-Ocampo L.M."/>
            <person name="McSpadden Gardener B.B."/>
            <person name="Kamoun S."/>
        </authorList>
    </citation>
    <scope>FUNCTION</scope>
</reference>
<reference key="7">
    <citation type="journal article" date="2010" name="Proc. Natl. Acad. Sci. U.S.A.">
        <title>Phytophthora infestans effector AVR3a is essential for virulence and manipulates plant immunity by stabilizing host E3 ligase CMPG1.</title>
        <authorList>
            <person name="Bos J.I."/>
            <person name="Armstrong M.R."/>
            <person name="Gilroy E.M."/>
            <person name="Boevink P.C."/>
            <person name="Hein I."/>
            <person name="Taylor R.M."/>
            <person name="Zhendong T."/>
            <person name="Engelhardt S."/>
            <person name="Vetukuri R.R."/>
            <person name="Harrower B."/>
            <person name="Dixelius C."/>
            <person name="Bryan G."/>
            <person name="Sadanandom A."/>
            <person name="Whisson S.C."/>
            <person name="Kamoun S."/>
            <person name="Birch P.R."/>
        </authorList>
    </citation>
    <scope>FUNCTION</scope>
    <scope>INTERACTION WITH HOST E3 LIGASE CMPG1</scope>
</reference>
<reference key="8">
    <citation type="journal article" date="2011" name="New Phytol.">
        <title>CMPG1-dependent cell death follows perception of diverse pathogen elicitors at the host plasma membrane and is suppressed by Phytophthora infestans RXLR effector AVR3a.</title>
        <authorList>
            <person name="Gilroy E.M."/>
            <person name="Taylor R.M."/>
            <person name="Hein I."/>
            <person name="Boevink P."/>
            <person name="Sadanandom A."/>
            <person name="Birch P.R."/>
        </authorList>
    </citation>
    <scope>FUNCTION</scope>
</reference>
<reference key="9">
    <citation type="journal article" date="2012" name="J. Biol. Chem.">
        <title>Avirulence protein 3a (AVR3a) from the potato pathogen Phytophthora infestans forms homodimers through its predicted translocation region and does not specifically bind phospholipids.</title>
        <authorList>
            <person name="Wawra S."/>
            <person name="Agacan M."/>
            <person name="Boddey J.A."/>
            <person name="Davidson I."/>
            <person name="Gachon C.M."/>
            <person name="Zanda M."/>
            <person name="Grouffaud S."/>
            <person name="Whisson S.C."/>
            <person name="Birch P.R."/>
            <person name="Porter A.J."/>
            <person name="van West P."/>
        </authorList>
    </citation>
    <scope>DOMAIN</scope>
    <scope>SUBUNIT</scope>
</reference>
<reference key="10">
    <citation type="journal article" date="2015" name="PLoS ONE">
        <title>Phytophthora infestans RXLR-WY Effector AVR3a Associates with Dynamin-Related Protein 2 Required for Endocytosis of the Plant Pattern Recognition Receptor FLS2.</title>
        <authorList>
            <person name="Chaparro-Garcia A."/>
            <person name="Schwizer S."/>
            <person name="Sklenar J."/>
            <person name="Yoshida K."/>
            <person name="Petre B."/>
            <person name="Bos J.I."/>
            <person name="Schornack S."/>
            <person name="Jones A.M."/>
            <person name="Bozkurt T.O."/>
            <person name="Kamoun S."/>
        </authorList>
    </citation>
    <scope>FUNCTION</scope>
    <scope>INTERACTION WITH DRP2</scope>
</reference>
<reference key="11">
    <citation type="journal article" date="2017" name="BMC Genomics">
        <title>RNA-seq of life stages of the oomycete Phytophthora infestans reveals dynamic changes in metabolic, signal transduction, and pathogenesis genes and a major role for calcium signaling in development.</title>
        <authorList>
            <person name="Ah-Fong A.M."/>
            <person name="Kim K.S."/>
            <person name="Judelson H.S."/>
        </authorList>
    </citation>
    <scope>INDUCTION</scope>
</reference>
<reference key="12">
    <citation type="journal article" date="2017" name="Plant Cell">
        <title>The RxLR motif of the host targeting effector AVR3a of Phytophthora infestans is cleaved before secretion.</title>
        <authorList>
            <person name="Wawra S."/>
            <person name="Trusch F."/>
            <person name="Matena A."/>
            <person name="Apostolakis K."/>
            <person name="Linne U."/>
            <person name="Zhukov I."/>
            <person name="Stanek J."/>
            <person name="Kozminski W."/>
            <person name="Davidson I."/>
            <person name="Secombes C.J."/>
            <person name="Bayer P."/>
            <person name="van West P."/>
        </authorList>
    </citation>
    <scope>CLEAVAGE</scope>
    <scope>ACETYLATION AT LYS-48</scope>
    <scope>SUBUNIT</scope>
    <scope>GLYCOSYLATION</scope>
</reference>
<reference key="13">
    <citation type="journal article" date="2017" name="Front. Plant Sci.">
        <title>Conserved RXLR effector genes of Phytophthora infestans expressed at the early stage of potato infection are suppressive to host defense.</title>
        <authorList>
            <person name="Yin J."/>
            <person name="Gu B."/>
            <person name="Huang G."/>
            <person name="Tian Y."/>
            <person name="Quan J."/>
            <person name="Lindqvist-Kreuze H."/>
            <person name="Shan W."/>
        </authorList>
    </citation>
    <scope>INDUCTION</scope>
    <scope>SUBCELLULAR LOCATION</scope>
</reference>
<dbReference type="EMBL" id="DS028151">
    <property type="protein sequence ID" value="EEY62600.1"/>
    <property type="molecule type" value="Genomic_DNA"/>
</dbReference>
<dbReference type="RefSeq" id="XP_002898842.1">
    <property type="nucleotide sequence ID" value="XM_002898796.1"/>
</dbReference>
<dbReference type="SMR" id="D0NPN8"/>
<dbReference type="STRING" id="403677.D0NPN8"/>
<dbReference type="iPTMnet" id="D0NPN8"/>
<dbReference type="EnsemblProtists" id="PITG_14371T0">
    <property type="protein sequence ID" value="PITG_14371T0"/>
    <property type="gene ID" value="PITG_14371"/>
</dbReference>
<dbReference type="GeneID" id="9479695"/>
<dbReference type="KEGG" id="pif:PITG_14371"/>
<dbReference type="VEuPathDB" id="FungiDB:PITG_14371"/>
<dbReference type="eggNOG" id="ENOG502RGQI">
    <property type="taxonomic scope" value="Eukaryota"/>
</dbReference>
<dbReference type="HOGENOM" id="CLU_1762379_0_0_1"/>
<dbReference type="InParanoid" id="D0NPN8"/>
<dbReference type="OMA" id="VMNDSPK"/>
<dbReference type="OrthoDB" id="120062at2759"/>
<dbReference type="PHI-base" id="PHI:10634"/>
<dbReference type="Proteomes" id="UP000006643">
    <property type="component" value="Partially assembled WGS sequence"/>
</dbReference>
<dbReference type="GO" id="GO:0005576">
    <property type="term" value="C:extracellular region"/>
    <property type="evidence" value="ECO:0007669"/>
    <property type="project" value="UniProtKB-SubCell"/>
</dbReference>
<dbReference type="GO" id="GO:0030430">
    <property type="term" value="C:host cell cytoplasm"/>
    <property type="evidence" value="ECO:0007669"/>
    <property type="project" value="UniProtKB-SubCell"/>
</dbReference>
<dbReference type="GO" id="GO:0080185">
    <property type="term" value="P:effector-mediated activation of plant hypersensitive response by symbiont"/>
    <property type="evidence" value="ECO:0000314"/>
    <property type="project" value="PHI-base"/>
</dbReference>
<dbReference type="Gene3D" id="1.10.10.2460">
    <property type="match status" value="1"/>
</dbReference>
<dbReference type="InterPro" id="IPR031825">
    <property type="entry name" value="RXLR"/>
</dbReference>
<dbReference type="Pfam" id="PF16810">
    <property type="entry name" value="RXLR"/>
    <property type="match status" value="1"/>
</dbReference>
<protein>
    <recommendedName>
        <fullName evidence="17">RxLR effector protein Avr3a</fullName>
    </recommendedName>
    <alternativeName>
        <fullName evidence="16">Avirulence protein 3a</fullName>
    </alternativeName>
</protein>
<accession>D0NPN8</accession>
<keyword id="KW-0007">Acetylation</keyword>
<keyword id="KW-0325">Glycoprotein</keyword>
<keyword id="KW-1035">Host cytoplasm</keyword>
<keyword id="KW-1185">Reference proteome</keyword>
<keyword id="KW-0964">Secreted</keyword>
<keyword id="KW-0732">Signal</keyword>
<keyword id="KW-0843">Virulence</keyword>
<organism>
    <name type="scientific">Phytophthora infestans (strain T30-4)</name>
    <name type="common">Potato late blight agent</name>
    <dbReference type="NCBI Taxonomy" id="403677"/>
    <lineage>
        <taxon>Eukaryota</taxon>
        <taxon>Sar</taxon>
        <taxon>Stramenopiles</taxon>
        <taxon>Oomycota</taxon>
        <taxon>Peronosporales</taxon>
        <taxon>Peronosporaceae</taxon>
        <taxon>Phytophthora</taxon>
    </lineage>
</organism>
<proteinExistence type="evidence at protein level"/>
<sequence length="147" mass="16661">MRLAIMLSATAVAINFATSSAIDQTKVLVYGTPAHYIHDSAGRRLLRKNEENEETSEERAPNFNLANLNEEMFNVAALTERADAKKLAKQLMGNDKLADAAYMWWQHNRVTLDQIDTFLKLASRKTQGAKYNQIYNSYMMHLGLTGY</sequence>
<name>A3AEM_PHYIT</name>
<evidence type="ECO:0000250" key="1">
    <source>
        <dbReference type="UniProtKB" id="E2DWQ7"/>
    </source>
</evidence>
<evidence type="ECO:0000255" key="2"/>
<evidence type="ECO:0000269" key="3">
    <source>
    </source>
</evidence>
<evidence type="ECO:0000269" key="4">
    <source>
    </source>
</evidence>
<evidence type="ECO:0000269" key="5">
    <source>
    </source>
</evidence>
<evidence type="ECO:0000269" key="6">
    <source>
    </source>
</evidence>
<evidence type="ECO:0000269" key="7">
    <source>
    </source>
</evidence>
<evidence type="ECO:0000269" key="8">
    <source>
    </source>
</evidence>
<evidence type="ECO:0000269" key="9">
    <source>
    </source>
</evidence>
<evidence type="ECO:0000269" key="10">
    <source>
    </source>
</evidence>
<evidence type="ECO:0000269" key="11">
    <source>
    </source>
</evidence>
<evidence type="ECO:0000269" key="12">
    <source>
    </source>
</evidence>
<evidence type="ECO:0000269" key="13">
    <source>
    </source>
</evidence>
<evidence type="ECO:0000269" key="14">
    <source>
    </source>
</evidence>
<evidence type="ECO:0000269" key="15">
    <source>
    </source>
</evidence>
<evidence type="ECO:0000303" key="16">
    <source>
    </source>
</evidence>
<evidence type="ECO:0000303" key="17">
    <source>
    </source>
</evidence>
<evidence type="ECO:0000303" key="18">
    <source>
    </source>
</evidence>
<evidence type="ECO:0000303" key="19">
    <source>
    </source>
</evidence>
<evidence type="ECO:0000305" key="20"/>
<evidence type="ECO:0000305" key="21">
    <source>
    </source>
</evidence>